<accession>A1ST94</accession>
<comment type="function">
    <text evidence="1">Required for insertion of 4Fe-4S clusters for at least IspG.</text>
</comment>
<comment type="cofactor">
    <cofactor evidence="1">
        <name>iron-sulfur cluster</name>
        <dbReference type="ChEBI" id="CHEBI:30408"/>
    </cofactor>
    <text evidence="1">Binds 1 iron-sulfur cluster per subunit.</text>
</comment>
<comment type="subunit">
    <text evidence="1">Homodimer.</text>
</comment>
<comment type="similarity">
    <text evidence="1">Belongs to the HesB/IscA family.</text>
</comment>
<sequence length="118" mass="12549">MTSEVQVEVAMPIYFSDSAANKVKGLIAEEENPNMKLRVYVTGGGCSGFSYGFTFAETANEDDTKIENAGVTLLVDPMSLQYLVGGTVDYTNGLEGSRFFVNNPNATATCGCGSSFSM</sequence>
<evidence type="ECO:0000255" key="1">
    <source>
        <dbReference type="HAMAP-Rule" id="MF_01380"/>
    </source>
</evidence>
<reference key="1">
    <citation type="journal article" date="2008" name="BMC Genomics">
        <title>Genomics of an extreme psychrophile, Psychromonas ingrahamii.</title>
        <authorList>
            <person name="Riley M."/>
            <person name="Staley J.T."/>
            <person name="Danchin A."/>
            <person name="Wang T.Z."/>
            <person name="Brettin T.S."/>
            <person name="Hauser L.J."/>
            <person name="Land M.L."/>
            <person name="Thompson L.S."/>
        </authorList>
    </citation>
    <scope>NUCLEOTIDE SEQUENCE [LARGE SCALE GENOMIC DNA]</scope>
    <source>
        <strain>DSM 17664 / CCUG 51855 / 37</strain>
    </source>
</reference>
<keyword id="KW-0408">Iron</keyword>
<keyword id="KW-0411">Iron-sulfur</keyword>
<keyword id="KW-0479">Metal-binding</keyword>
<keyword id="KW-1185">Reference proteome</keyword>
<feature type="chain" id="PRO_0000311535" description="Iron-sulfur cluster insertion protein ErpA">
    <location>
        <begin position="1"/>
        <end position="118"/>
    </location>
</feature>
<feature type="binding site" evidence="1">
    <location>
        <position position="46"/>
    </location>
    <ligand>
        <name>iron-sulfur cluster</name>
        <dbReference type="ChEBI" id="CHEBI:30408"/>
    </ligand>
</feature>
<feature type="binding site" evidence="1">
    <location>
        <position position="110"/>
    </location>
    <ligand>
        <name>iron-sulfur cluster</name>
        <dbReference type="ChEBI" id="CHEBI:30408"/>
    </ligand>
</feature>
<feature type="binding site" evidence="1">
    <location>
        <position position="112"/>
    </location>
    <ligand>
        <name>iron-sulfur cluster</name>
        <dbReference type="ChEBI" id="CHEBI:30408"/>
    </ligand>
</feature>
<name>ERPA_PSYIN</name>
<proteinExistence type="inferred from homology"/>
<protein>
    <recommendedName>
        <fullName evidence="1">Iron-sulfur cluster insertion protein ErpA</fullName>
    </recommendedName>
</protein>
<dbReference type="EMBL" id="CP000510">
    <property type="protein sequence ID" value="ABM02709.1"/>
    <property type="molecule type" value="Genomic_DNA"/>
</dbReference>
<dbReference type="RefSeq" id="WP_011769272.1">
    <property type="nucleotide sequence ID" value="NC_008709.1"/>
</dbReference>
<dbReference type="SMR" id="A1ST94"/>
<dbReference type="STRING" id="357804.Ping_0867"/>
<dbReference type="KEGG" id="pin:Ping_0867"/>
<dbReference type="eggNOG" id="COG0316">
    <property type="taxonomic scope" value="Bacteria"/>
</dbReference>
<dbReference type="HOGENOM" id="CLU_069054_5_3_6"/>
<dbReference type="OrthoDB" id="9801228at2"/>
<dbReference type="Proteomes" id="UP000000639">
    <property type="component" value="Chromosome"/>
</dbReference>
<dbReference type="GO" id="GO:0005829">
    <property type="term" value="C:cytosol"/>
    <property type="evidence" value="ECO:0007669"/>
    <property type="project" value="TreeGrafter"/>
</dbReference>
<dbReference type="GO" id="GO:0051537">
    <property type="term" value="F:2 iron, 2 sulfur cluster binding"/>
    <property type="evidence" value="ECO:0007669"/>
    <property type="project" value="TreeGrafter"/>
</dbReference>
<dbReference type="GO" id="GO:0051539">
    <property type="term" value="F:4 iron, 4 sulfur cluster binding"/>
    <property type="evidence" value="ECO:0007669"/>
    <property type="project" value="TreeGrafter"/>
</dbReference>
<dbReference type="GO" id="GO:0005506">
    <property type="term" value="F:iron ion binding"/>
    <property type="evidence" value="ECO:0007669"/>
    <property type="project" value="UniProtKB-UniRule"/>
</dbReference>
<dbReference type="GO" id="GO:0016226">
    <property type="term" value="P:iron-sulfur cluster assembly"/>
    <property type="evidence" value="ECO:0007669"/>
    <property type="project" value="UniProtKB-UniRule"/>
</dbReference>
<dbReference type="FunFam" id="2.60.300.12:FF:000002">
    <property type="entry name" value="Iron-sulfur cluster insertion protein ErpA"/>
    <property type="match status" value="1"/>
</dbReference>
<dbReference type="Gene3D" id="2.60.300.12">
    <property type="entry name" value="HesB-like domain"/>
    <property type="match status" value="1"/>
</dbReference>
<dbReference type="HAMAP" id="MF_01380">
    <property type="entry name" value="Fe_S_insert_ErpA"/>
    <property type="match status" value="1"/>
</dbReference>
<dbReference type="InterPro" id="IPR000361">
    <property type="entry name" value="FeS_biogenesis"/>
</dbReference>
<dbReference type="InterPro" id="IPR016092">
    <property type="entry name" value="FeS_cluster_insertion"/>
</dbReference>
<dbReference type="InterPro" id="IPR017870">
    <property type="entry name" value="FeS_cluster_insertion_CS"/>
</dbReference>
<dbReference type="InterPro" id="IPR023063">
    <property type="entry name" value="FeS_cluster_insertion_RrpA"/>
</dbReference>
<dbReference type="InterPro" id="IPR035903">
    <property type="entry name" value="HesB-like_dom_sf"/>
</dbReference>
<dbReference type="NCBIfam" id="TIGR00049">
    <property type="entry name" value="iron-sulfur cluster assembly accessory protein"/>
    <property type="match status" value="1"/>
</dbReference>
<dbReference type="NCBIfam" id="NF010147">
    <property type="entry name" value="PRK13623.1"/>
    <property type="match status" value="1"/>
</dbReference>
<dbReference type="PANTHER" id="PTHR43011">
    <property type="entry name" value="IRON-SULFUR CLUSTER ASSEMBLY 2 HOMOLOG, MITOCHONDRIAL"/>
    <property type="match status" value="1"/>
</dbReference>
<dbReference type="PANTHER" id="PTHR43011:SF1">
    <property type="entry name" value="IRON-SULFUR CLUSTER ASSEMBLY 2 HOMOLOG, MITOCHONDRIAL"/>
    <property type="match status" value="1"/>
</dbReference>
<dbReference type="Pfam" id="PF01521">
    <property type="entry name" value="Fe-S_biosyn"/>
    <property type="match status" value="1"/>
</dbReference>
<dbReference type="SUPFAM" id="SSF89360">
    <property type="entry name" value="HesB-like domain"/>
    <property type="match status" value="1"/>
</dbReference>
<dbReference type="PROSITE" id="PS01152">
    <property type="entry name" value="HESB"/>
    <property type="match status" value="1"/>
</dbReference>
<organism>
    <name type="scientific">Psychromonas ingrahamii (strain DSM 17664 / CCUG 51855 / 37)</name>
    <dbReference type="NCBI Taxonomy" id="357804"/>
    <lineage>
        <taxon>Bacteria</taxon>
        <taxon>Pseudomonadati</taxon>
        <taxon>Pseudomonadota</taxon>
        <taxon>Gammaproteobacteria</taxon>
        <taxon>Alteromonadales</taxon>
        <taxon>Psychromonadaceae</taxon>
        <taxon>Psychromonas</taxon>
    </lineage>
</organism>
<gene>
    <name evidence="1" type="primary">erpA</name>
    <name type="ordered locus">Ping_0867</name>
</gene>